<name>HIS82_BACC1</name>
<organism>
    <name type="scientific">Bacillus cereus (strain ATCC 10987 / NRS 248)</name>
    <dbReference type="NCBI Taxonomy" id="222523"/>
    <lineage>
        <taxon>Bacteria</taxon>
        <taxon>Bacillati</taxon>
        <taxon>Bacillota</taxon>
        <taxon>Bacilli</taxon>
        <taxon>Bacillales</taxon>
        <taxon>Bacillaceae</taxon>
        <taxon>Bacillus</taxon>
        <taxon>Bacillus cereus group</taxon>
    </lineage>
</organism>
<protein>
    <recommendedName>
        <fullName evidence="1">Histidinol-phosphate aminotransferase 2</fullName>
        <ecNumber evidence="1">2.6.1.9</ecNumber>
    </recommendedName>
    <alternativeName>
        <fullName evidence="1">Imidazole acetol-phosphate transaminase 2</fullName>
    </alternativeName>
</protein>
<dbReference type="EC" id="2.6.1.9" evidence="1"/>
<dbReference type="EMBL" id="AE017194">
    <property type="protein sequence ID" value="AAS41907.1"/>
    <property type="molecule type" value="Genomic_DNA"/>
</dbReference>
<dbReference type="SMR" id="Q736A5"/>
<dbReference type="KEGG" id="bca:BCE_2996"/>
<dbReference type="HOGENOM" id="CLU_017584_3_3_9"/>
<dbReference type="UniPathway" id="UPA00031">
    <property type="reaction ID" value="UER00012"/>
</dbReference>
<dbReference type="Proteomes" id="UP000002527">
    <property type="component" value="Chromosome"/>
</dbReference>
<dbReference type="GO" id="GO:0004400">
    <property type="term" value="F:histidinol-phosphate transaminase activity"/>
    <property type="evidence" value="ECO:0007669"/>
    <property type="project" value="UniProtKB-UniRule"/>
</dbReference>
<dbReference type="GO" id="GO:0030170">
    <property type="term" value="F:pyridoxal phosphate binding"/>
    <property type="evidence" value="ECO:0007669"/>
    <property type="project" value="InterPro"/>
</dbReference>
<dbReference type="GO" id="GO:0000105">
    <property type="term" value="P:L-histidine biosynthetic process"/>
    <property type="evidence" value="ECO:0007669"/>
    <property type="project" value="UniProtKB-UniRule"/>
</dbReference>
<dbReference type="CDD" id="cd00609">
    <property type="entry name" value="AAT_like"/>
    <property type="match status" value="1"/>
</dbReference>
<dbReference type="Gene3D" id="3.90.1150.10">
    <property type="entry name" value="Aspartate Aminotransferase, domain 1"/>
    <property type="match status" value="1"/>
</dbReference>
<dbReference type="Gene3D" id="3.40.640.10">
    <property type="entry name" value="Type I PLP-dependent aspartate aminotransferase-like (Major domain)"/>
    <property type="match status" value="1"/>
</dbReference>
<dbReference type="HAMAP" id="MF_01023">
    <property type="entry name" value="HisC_aminotrans_2"/>
    <property type="match status" value="1"/>
</dbReference>
<dbReference type="InterPro" id="IPR001917">
    <property type="entry name" value="Aminotrans_II_pyridoxalP_BS"/>
</dbReference>
<dbReference type="InterPro" id="IPR004839">
    <property type="entry name" value="Aminotransferase_I/II_large"/>
</dbReference>
<dbReference type="InterPro" id="IPR005861">
    <property type="entry name" value="HisP_aminotrans"/>
</dbReference>
<dbReference type="InterPro" id="IPR050106">
    <property type="entry name" value="HistidinolP_aminotransfase"/>
</dbReference>
<dbReference type="InterPro" id="IPR015424">
    <property type="entry name" value="PyrdxlP-dep_Trfase"/>
</dbReference>
<dbReference type="InterPro" id="IPR015421">
    <property type="entry name" value="PyrdxlP-dep_Trfase_major"/>
</dbReference>
<dbReference type="InterPro" id="IPR015422">
    <property type="entry name" value="PyrdxlP-dep_Trfase_small"/>
</dbReference>
<dbReference type="NCBIfam" id="TIGR01141">
    <property type="entry name" value="hisC"/>
    <property type="match status" value="1"/>
</dbReference>
<dbReference type="PANTHER" id="PTHR43643:SF3">
    <property type="entry name" value="HISTIDINOL-PHOSPHATE AMINOTRANSFERASE"/>
    <property type="match status" value="1"/>
</dbReference>
<dbReference type="PANTHER" id="PTHR43643">
    <property type="entry name" value="HISTIDINOL-PHOSPHATE AMINOTRANSFERASE 2"/>
    <property type="match status" value="1"/>
</dbReference>
<dbReference type="Pfam" id="PF00155">
    <property type="entry name" value="Aminotran_1_2"/>
    <property type="match status" value="1"/>
</dbReference>
<dbReference type="SUPFAM" id="SSF53383">
    <property type="entry name" value="PLP-dependent transferases"/>
    <property type="match status" value="1"/>
</dbReference>
<dbReference type="PROSITE" id="PS00599">
    <property type="entry name" value="AA_TRANSFER_CLASS_2"/>
    <property type="match status" value="1"/>
</dbReference>
<comment type="catalytic activity">
    <reaction evidence="1">
        <text>L-histidinol phosphate + 2-oxoglutarate = 3-(imidazol-4-yl)-2-oxopropyl phosphate + L-glutamate</text>
        <dbReference type="Rhea" id="RHEA:23744"/>
        <dbReference type="ChEBI" id="CHEBI:16810"/>
        <dbReference type="ChEBI" id="CHEBI:29985"/>
        <dbReference type="ChEBI" id="CHEBI:57766"/>
        <dbReference type="ChEBI" id="CHEBI:57980"/>
        <dbReference type="EC" id="2.6.1.9"/>
    </reaction>
</comment>
<comment type="cofactor">
    <cofactor evidence="1">
        <name>pyridoxal 5'-phosphate</name>
        <dbReference type="ChEBI" id="CHEBI:597326"/>
    </cofactor>
</comment>
<comment type="pathway">
    <text evidence="1">Amino-acid biosynthesis; L-histidine biosynthesis; L-histidine from 5-phospho-alpha-D-ribose 1-diphosphate: step 7/9.</text>
</comment>
<comment type="subunit">
    <text evidence="1">Homodimer.</text>
</comment>
<comment type="similarity">
    <text evidence="1">Belongs to the class-II pyridoxal-phosphate-dependent aminotransferase family. Histidinol-phosphate aminotransferase subfamily.</text>
</comment>
<keyword id="KW-0028">Amino-acid biosynthesis</keyword>
<keyword id="KW-0032">Aminotransferase</keyword>
<keyword id="KW-0368">Histidine biosynthesis</keyword>
<keyword id="KW-0663">Pyridoxal phosphate</keyword>
<keyword id="KW-0808">Transferase</keyword>
<evidence type="ECO:0000255" key="1">
    <source>
        <dbReference type="HAMAP-Rule" id="MF_01023"/>
    </source>
</evidence>
<evidence type="ECO:0000256" key="2">
    <source>
        <dbReference type="SAM" id="MobiDB-lite"/>
    </source>
</evidence>
<accession>Q736A5</accession>
<sequence length="366" mass="40982">MQVKDQLSSLQPYKPGKSPEQMKEVYGDHAFVKLASNENPFGCSPRVLDELQKSWLDHALYPDGGATTLRQTIANKLQVQMEQVLCGSGLDEVIQIISRAALKAGDNIVTAGATFPQYRHHAIIEGCEVKEVPLNNGVYDLDEISSAVNNNTKIVWICNPNNPTGTYVNDRKLTQFIEGISENTLIVIDEAYYEYVTAKDFPETLPLLEKHKNILVLRTFSKAYGLASFRVGYAIGQEELIEKLNVVRLPFNVSSLAQKAATIAFGDDEFIEEIVRVNTEGLQQYESFCKENDIPFYPSQTNFIFLPVENAGEIYEACAHAGFIIRPFPNGVRITVGTREQNEGVISVLQQHFENKKRKSRDEANA</sequence>
<proteinExistence type="inferred from homology"/>
<gene>
    <name evidence="1" type="primary">hisC2</name>
    <name type="ordered locus">BCE_2996</name>
</gene>
<feature type="chain" id="PRO_0000153300" description="Histidinol-phosphate aminotransferase 2">
    <location>
        <begin position="1"/>
        <end position="366"/>
    </location>
</feature>
<feature type="region of interest" description="Disordered" evidence="2">
    <location>
        <begin position="1"/>
        <end position="21"/>
    </location>
</feature>
<feature type="compositionally biased region" description="Polar residues" evidence="2">
    <location>
        <begin position="1"/>
        <end position="11"/>
    </location>
</feature>
<feature type="modified residue" description="N6-(pyridoxal phosphate)lysine" evidence="1">
    <location>
        <position position="222"/>
    </location>
</feature>
<reference key="1">
    <citation type="journal article" date="2004" name="Nucleic Acids Res.">
        <title>The genome sequence of Bacillus cereus ATCC 10987 reveals metabolic adaptations and a large plasmid related to Bacillus anthracis pXO1.</title>
        <authorList>
            <person name="Rasko D.A."/>
            <person name="Ravel J."/>
            <person name="Oekstad O.A."/>
            <person name="Helgason E."/>
            <person name="Cer R.Z."/>
            <person name="Jiang L."/>
            <person name="Shores K.A."/>
            <person name="Fouts D.E."/>
            <person name="Tourasse N.J."/>
            <person name="Angiuoli S.V."/>
            <person name="Kolonay J.F."/>
            <person name="Nelson W.C."/>
            <person name="Kolstoe A.-B."/>
            <person name="Fraser C.M."/>
            <person name="Read T.D."/>
        </authorList>
    </citation>
    <scope>NUCLEOTIDE SEQUENCE [LARGE SCALE GENOMIC DNA]</scope>
    <source>
        <strain>ATCC 10987 / NRS 248</strain>
    </source>
</reference>